<gene>
    <name evidence="1" type="primary">guaA</name>
    <name type="ordered locus">CLB_3351</name>
</gene>
<comment type="function">
    <text evidence="1">Catalyzes the synthesis of GMP from XMP.</text>
</comment>
<comment type="catalytic activity">
    <reaction evidence="1">
        <text>XMP + L-glutamine + ATP + H2O = GMP + L-glutamate + AMP + diphosphate + 2 H(+)</text>
        <dbReference type="Rhea" id="RHEA:11680"/>
        <dbReference type="ChEBI" id="CHEBI:15377"/>
        <dbReference type="ChEBI" id="CHEBI:15378"/>
        <dbReference type="ChEBI" id="CHEBI:29985"/>
        <dbReference type="ChEBI" id="CHEBI:30616"/>
        <dbReference type="ChEBI" id="CHEBI:33019"/>
        <dbReference type="ChEBI" id="CHEBI:57464"/>
        <dbReference type="ChEBI" id="CHEBI:58115"/>
        <dbReference type="ChEBI" id="CHEBI:58359"/>
        <dbReference type="ChEBI" id="CHEBI:456215"/>
        <dbReference type="EC" id="6.3.5.2"/>
    </reaction>
</comment>
<comment type="pathway">
    <text evidence="1">Purine metabolism; GMP biosynthesis; GMP from XMP (L-Gln route): step 1/1.</text>
</comment>
<comment type="subunit">
    <text evidence="1">Homodimer.</text>
</comment>
<evidence type="ECO:0000255" key="1">
    <source>
        <dbReference type="HAMAP-Rule" id="MF_00344"/>
    </source>
</evidence>
<feature type="chain" id="PRO_1000120257" description="GMP synthase [glutamine-hydrolyzing]">
    <location>
        <begin position="1"/>
        <end position="510"/>
    </location>
</feature>
<feature type="domain" description="Glutamine amidotransferase type-1" evidence="1">
    <location>
        <begin position="5"/>
        <end position="195"/>
    </location>
</feature>
<feature type="domain" description="GMPS ATP-PPase" evidence="1">
    <location>
        <begin position="196"/>
        <end position="385"/>
    </location>
</feature>
<feature type="active site" description="Nucleophile" evidence="1">
    <location>
        <position position="82"/>
    </location>
</feature>
<feature type="active site" evidence="1">
    <location>
        <position position="169"/>
    </location>
</feature>
<feature type="active site" evidence="1">
    <location>
        <position position="171"/>
    </location>
</feature>
<feature type="binding site" evidence="1">
    <location>
        <begin position="223"/>
        <end position="229"/>
    </location>
    <ligand>
        <name>ATP</name>
        <dbReference type="ChEBI" id="CHEBI:30616"/>
    </ligand>
</feature>
<dbReference type="EC" id="6.3.5.2" evidence="1"/>
<dbReference type="EMBL" id="CP000726">
    <property type="protein sequence ID" value="ABS34810.1"/>
    <property type="molecule type" value="Genomic_DNA"/>
</dbReference>
<dbReference type="RefSeq" id="WP_012048241.1">
    <property type="nucleotide sequence ID" value="NC_009697.1"/>
</dbReference>
<dbReference type="SMR" id="A7FYP0"/>
<dbReference type="MEROPS" id="C26.957"/>
<dbReference type="GeneID" id="5187511"/>
<dbReference type="KEGG" id="cba:CLB_3351"/>
<dbReference type="HOGENOM" id="CLU_014340_0_5_9"/>
<dbReference type="UniPathway" id="UPA00189">
    <property type="reaction ID" value="UER00296"/>
</dbReference>
<dbReference type="GO" id="GO:0005829">
    <property type="term" value="C:cytosol"/>
    <property type="evidence" value="ECO:0007669"/>
    <property type="project" value="TreeGrafter"/>
</dbReference>
<dbReference type="GO" id="GO:0005524">
    <property type="term" value="F:ATP binding"/>
    <property type="evidence" value="ECO:0007669"/>
    <property type="project" value="UniProtKB-UniRule"/>
</dbReference>
<dbReference type="GO" id="GO:0003921">
    <property type="term" value="F:GMP synthase activity"/>
    <property type="evidence" value="ECO:0007669"/>
    <property type="project" value="InterPro"/>
</dbReference>
<dbReference type="CDD" id="cd01742">
    <property type="entry name" value="GATase1_GMP_Synthase"/>
    <property type="match status" value="1"/>
</dbReference>
<dbReference type="CDD" id="cd01997">
    <property type="entry name" value="GMP_synthase_C"/>
    <property type="match status" value="1"/>
</dbReference>
<dbReference type="FunFam" id="3.30.300.10:FF:000002">
    <property type="entry name" value="GMP synthase [glutamine-hydrolyzing]"/>
    <property type="match status" value="1"/>
</dbReference>
<dbReference type="FunFam" id="3.40.50.620:FF:000001">
    <property type="entry name" value="GMP synthase [glutamine-hydrolyzing]"/>
    <property type="match status" value="1"/>
</dbReference>
<dbReference type="FunFam" id="3.40.50.880:FF:000001">
    <property type="entry name" value="GMP synthase [glutamine-hydrolyzing]"/>
    <property type="match status" value="1"/>
</dbReference>
<dbReference type="Gene3D" id="3.30.300.10">
    <property type="match status" value="1"/>
</dbReference>
<dbReference type="Gene3D" id="3.40.50.880">
    <property type="match status" value="1"/>
</dbReference>
<dbReference type="Gene3D" id="3.40.50.620">
    <property type="entry name" value="HUPs"/>
    <property type="match status" value="1"/>
</dbReference>
<dbReference type="HAMAP" id="MF_00344">
    <property type="entry name" value="GMP_synthase"/>
    <property type="match status" value="1"/>
</dbReference>
<dbReference type="InterPro" id="IPR029062">
    <property type="entry name" value="Class_I_gatase-like"/>
</dbReference>
<dbReference type="InterPro" id="IPR017926">
    <property type="entry name" value="GATASE"/>
</dbReference>
<dbReference type="InterPro" id="IPR001674">
    <property type="entry name" value="GMP_synth_C"/>
</dbReference>
<dbReference type="InterPro" id="IPR004739">
    <property type="entry name" value="GMP_synth_GATase"/>
</dbReference>
<dbReference type="InterPro" id="IPR022955">
    <property type="entry name" value="GMP_synthase"/>
</dbReference>
<dbReference type="InterPro" id="IPR025777">
    <property type="entry name" value="GMPS_ATP_PPase_dom"/>
</dbReference>
<dbReference type="InterPro" id="IPR022310">
    <property type="entry name" value="NAD/GMP_synthase"/>
</dbReference>
<dbReference type="InterPro" id="IPR014729">
    <property type="entry name" value="Rossmann-like_a/b/a_fold"/>
</dbReference>
<dbReference type="NCBIfam" id="TIGR00884">
    <property type="entry name" value="guaA_Cterm"/>
    <property type="match status" value="1"/>
</dbReference>
<dbReference type="NCBIfam" id="TIGR00888">
    <property type="entry name" value="guaA_Nterm"/>
    <property type="match status" value="1"/>
</dbReference>
<dbReference type="NCBIfam" id="NF000848">
    <property type="entry name" value="PRK00074.1"/>
    <property type="match status" value="1"/>
</dbReference>
<dbReference type="PANTHER" id="PTHR11922:SF2">
    <property type="entry name" value="GMP SYNTHASE [GLUTAMINE-HYDROLYZING]"/>
    <property type="match status" value="1"/>
</dbReference>
<dbReference type="PANTHER" id="PTHR11922">
    <property type="entry name" value="GMP SYNTHASE-RELATED"/>
    <property type="match status" value="1"/>
</dbReference>
<dbReference type="Pfam" id="PF00117">
    <property type="entry name" value="GATase"/>
    <property type="match status" value="1"/>
</dbReference>
<dbReference type="Pfam" id="PF00958">
    <property type="entry name" value="GMP_synt_C"/>
    <property type="match status" value="1"/>
</dbReference>
<dbReference type="Pfam" id="PF02540">
    <property type="entry name" value="NAD_synthase"/>
    <property type="match status" value="1"/>
</dbReference>
<dbReference type="PRINTS" id="PR00099">
    <property type="entry name" value="CPSGATASE"/>
</dbReference>
<dbReference type="PRINTS" id="PR00096">
    <property type="entry name" value="GATASE"/>
</dbReference>
<dbReference type="SUPFAM" id="SSF52402">
    <property type="entry name" value="Adenine nucleotide alpha hydrolases-like"/>
    <property type="match status" value="1"/>
</dbReference>
<dbReference type="SUPFAM" id="SSF52317">
    <property type="entry name" value="Class I glutamine amidotransferase-like"/>
    <property type="match status" value="1"/>
</dbReference>
<dbReference type="PROSITE" id="PS51273">
    <property type="entry name" value="GATASE_TYPE_1"/>
    <property type="match status" value="1"/>
</dbReference>
<dbReference type="PROSITE" id="PS51553">
    <property type="entry name" value="GMPS_ATP_PPASE"/>
    <property type="match status" value="1"/>
</dbReference>
<reference key="1">
    <citation type="journal article" date="2007" name="PLoS ONE">
        <title>Analysis of the neurotoxin complex genes in Clostridium botulinum A1-A4 and B1 strains: BoNT/A3, /Ba4 and /B1 clusters are located within plasmids.</title>
        <authorList>
            <person name="Smith T.J."/>
            <person name="Hill K.K."/>
            <person name="Foley B.T."/>
            <person name="Detter J.C."/>
            <person name="Munk A.C."/>
            <person name="Bruce D.C."/>
            <person name="Doggett N.A."/>
            <person name="Smith L.A."/>
            <person name="Marks J.D."/>
            <person name="Xie G."/>
            <person name="Brettin T.S."/>
        </authorList>
    </citation>
    <scope>NUCLEOTIDE SEQUENCE [LARGE SCALE GENOMIC DNA]</scope>
    <source>
        <strain>ATCC 19397 / Type A</strain>
    </source>
</reference>
<keyword id="KW-0067">ATP-binding</keyword>
<keyword id="KW-0315">Glutamine amidotransferase</keyword>
<keyword id="KW-0332">GMP biosynthesis</keyword>
<keyword id="KW-0436">Ligase</keyword>
<keyword id="KW-0547">Nucleotide-binding</keyword>
<keyword id="KW-0658">Purine biosynthesis</keyword>
<proteinExistence type="inferred from homology"/>
<sequence length="510" mass="57513">MNKELVLVVDFGGQYNQLIARRVRENRVYCEIVPYTTSIEDIKEKAPKGIIFTGGPNSVYGENAPRVQKELFDLGIPVLGICYGDQLMAHSLEGEVTSPEKREYGKTDVNLDNSSLLFKDMKEKDQCWMSHTDYISKVPKGFKIIATTDECPCAAMENAEKKLYGVQFHPEVEHTLFGKKMLKNFLFNVCNLKGDWSMSSFAEQQIKAIKEKVGDKKVICALSGGVDSSVAAVIVHKAIGKQLTCVFVDHGLLRKDEGDQVERIFKDQFDMNLIRVNAQDRFLGKLKGVSDPERKRKIIGEEFIRVFEEEAKKLGDISFLVQGTIYPDIVESGTNTSATIKSHHNVGGLPEDMEFKLIEPLRELFKDEVRAVGEELGIPHKLVWRQPFPGPGLAIRVLGEVTEEKLAITREADAIFREEIAKAGLEEKIWQYFACLPNIQSVGVMGDERTYCHTIALRAVTSSDAMTSDWARIPYEVLDKVSRRIVNEVKEVNRIVYDVTSKPPATIEWE</sequence>
<name>GUAA_CLOB1</name>
<accession>A7FYP0</accession>
<protein>
    <recommendedName>
        <fullName evidence="1">GMP synthase [glutamine-hydrolyzing]</fullName>
        <ecNumber evidence="1">6.3.5.2</ecNumber>
    </recommendedName>
    <alternativeName>
        <fullName evidence="1">GMP synthetase</fullName>
    </alternativeName>
    <alternativeName>
        <fullName evidence="1">Glutamine amidotransferase</fullName>
    </alternativeName>
</protein>
<organism>
    <name type="scientific">Clostridium botulinum (strain ATCC 19397 / Type A)</name>
    <dbReference type="NCBI Taxonomy" id="441770"/>
    <lineage>
        <taxon>Bacteria</taxon>
        <taxon>Bacillati</taxon>
        <taxon>Bacillota</taxon>
        <taxon>Clostridia</taxon>
        <taxon>Eubacteriales</taxon>
        <taxon>Clostridiaceae</taxon>
        <taxon>Clostridium</taxon>
    </lineage>
</organism>